<feature type="chain" id="PRO_1000045090" description="4-deoxy-L-threo-5-hexosulose-uronate ketol-isomerase">
    <location>
        <begin position="1"/>
        <end position="278"/>
    </location>
</feature>
<feature type="binding site" evidence="1">
    <location>
        <position position="196"/>
    </location>
    <ligand>
        <name>Zn(2+)</name>
        <dbReference type="ChEBI" id="CHEBI:29105"/>
    </ligand>
</feature>
<feature type="binding site" evidence="1">
    <location>
        <position position="198"/>
    </location>
    <ligand>
        <name>Zn(2+)</name>
        <dbReference type="ChEBI" id="CHEBI:29105"/>
    </ligand>
</feature>
<feature type="binding site" evidence="1">
    <location>
        <position position="203"/>
    </location>
    <ligand>
        <name>Zn(2+)</name>
        <dbReference type="ChEBI" id="CHEBI:29105"/>
    </ligand>
</feature>
<feature type="binding site" evidence="1">
    <location>
        <position position="245"/>
    </location>
    <ligand>
        <name>Zn(2+)</name>
        <dbReference type="ChEBI" id="CHEBI:29105"/>
    </ligand>
</feature>
<evidence type="ECO:0000255" key="1">
    <source>
        <dbReference type="HAMAP-Rule" id="MF_00687"/>
    </source>
</evidence>
<dbReference type="EC" id="5.3.1.17" evidence="1"/>
<dbReference type="EMBL" id="CP000036">
    <property type="protein sequence ID" value="ABB67263.1"/>
    <property type="molecule type" value="Genomic_DNA"/>
</dbReference>
<dbReference type="RefSeq" id="WP_000383219.1">
    <property type="nucleotide sequence ID" value="NC_007613.1"/>
</dbReference>
<dbReference type="SMR" id="Q31XE5"/>
<dbReference type="KEGG" id="sbo:SBO_2735"/>
<dbReference type="HOGENOM" id="CLU_062609_0_0_6"/>
<dbReference type="UniPathway" id="UPA00545">
    <property type="reaction ID" value="UER00826"/>
</dbReference>
<dbReference type="Proteomes" id="UP000007067">
    <property type="component" value="Chromosome"/>
</dbReference>
<dbReference type="GO" id="GO:0008697">
    <property type="term" value="F:4-deoxy-L-threo-5-hexosulose-uronate ketol-isomerase activity"/>
    <property type="evidence" value="ECO:0007669"/>
    <property type="project" value="UniProtKB-UniRule"/>
</dbReference>
<dbReference type="GO" id="GO:0008270">
    <property type="term" value="F:zinc ion binding"/>
    <property type="evidence" value="ECO:0007669"/>
    <property type="project" value="UniProtKB-UniRule"/>
</dbReference>
<dbReference type="GO" id="GO:0019698">
    <property type="term" value="P:D-galacturonate catabolic process"/>
    <property type="evidence" value="ECO:0007669"/>
    <property type="project" value="TreeGrafter"/>
</dbReference>
<dbReference type="GO" id="GO:0042840">
    <property type="term" value="P:D-glucuronate catabolic process"/>
    <property type="evidence" value="ECO:0007669"/>
    <property type="project" value="TreeGrafter"/>
</dbReference>
<dbReference type="GO" id="GO:0045490">
    <property type="term" value="P:pectin catabolic process"/>
    <property type="evidence" value="ECO:0007669"/>
    <property type="project" value="UniProtKB-UniRule"/>
</dbReference>
<dbReference type="CDD" id="cd20491">
    <property type="entry name" value="cupin_KduI_C"/>
    <property type="match status" value="1"/>
</dbReference>
<dbReference type="CDD" id="cd20294">
    <property type="entry name" value="cupin_KduI_N"/>
    <property type="match status" value="1"/>
</dbReference>
<dbReference type="FunFam" id="2.60.120.10:FF:000018">
    <property type="entry name" value="4-deoxy-L-threo-5-hexosulose-uronate ketol-isomerase"/>
    <property type="match status" value="1"/>
</dbReference>
<dbReference type="FunFam" id="2.60.120.520:FF:000001">
    <property type="entry name" value="4-deoxy-L-threo-5-hexosulose-uronate ketol-isomerase"/>
    <property type="match status" value="1"/>
</dbReference>
<dbReference type="Gene3D" id="2.60.120.10">
    <property type="entry name" value="Jelly Rolls"/>
    <property type="match status" value="1"/>
</dbReference>
<dbReference type="Gene3D" id="2.60.120.520">
    <property type="entry name" value="pectin degrading enzyme 5-keto 4- deoxyuronate isomerase, domain 1"/>
    <property type="match status" value="1"/>
</dbReference>
<dbReference type="HAMAP" id="MF_00687">
    <property type="entry name" value="KduI"/>
    <property type="match status" value="1"/>
</dbReference>
<dbReference type="InterPro" id="IPR007045">
    <property type="entry name" value="KduI"/>
</dbReference>
<dbReference type="InterPro" id="IPR021120">
    <property type="entry name" value="KduI/IolB_isomerase"/>
</dbReference>
<dbReference type="InterPro" id="IPR027449">
    <property type="entry name" value="KduI_N"/>
</dbReference>
<dbReference type="InterPro" id="IPR014710">
    <property type="entry name" value="RmlC-like_jellyroll"/>
</dbReference>
<dbReference type="InterPro" id="IPR011051">
    <property type="entry name" value="RmlC_Cupin_sf"/>
</dbReference>
<dbReference type="NCBIfam" id="NF002091">
    <property type="entry name" value="PRK00924.1"/>
    <property type="match status" value="1"/>
</dbReference>
<dbReference type="PANTHER" id="PTHR38461">
    <property type="entry name" value="4-DEOXY-L-THREO-5-HEXOSULOSE-URONATE KETOL-ISOMERASE"/>
    <property type="match status" value="1"/>
</dbReference>
<dbReference type="PANTHER" id="PTHR38461:SF1">
    <property type="entry name" value="4-DEOXY-L-THREO-5-HEXOSULOSE-URONATE KETOL-ISOMERASE"/>
    <property type="match status" value="1"/>
</dbReference>
<dbReference type="Pfam" id="PF04962">
    <property type="entry name" value="KduI"/>
    <property type="match status" value="1"/>
</dbReference>
<dbReference type="PIRSF" id="PIRSF006625">
    <property type="entry name" value="KduI"/>
    <property type="match status" value="1"/>
</dbReference>
<dbReference type="SUPFAM" id="SSF51182">
    <property type="entry name" value="RmlC-like cupins"/>
    <property type="match status" value="1"/>
</dbReference>
<gene>
    <name evidence="1" type="primary">kduI</name>
    <name type="ordered locus">SBO_2735</name>
</gene>
<organism>
    <name type="scientific">Shigella boydii serotype 4 (strain Sb227)</name>
    <dbReference type="NCBI Taxonomy" id="300268"/>
    <lineage>
        <taxon>Bacteria</taxon>
        <taxon>Pseudomonadati</taxon>
        <taxon>Pseudomonadota</taxon>
        <taxon>Gammaproteobacteria</taxon>
        <taxon>Enterobacterales</taxon>
        <taxon>Enterobacteriaceae</taxon>
        <taxon>Shigella</taxon>
    </lineage>
</organism>
<reference key="1">
    <citation type="journal article" date="2005" name="Nucleic Acids Res.">
        <title>Genome dynamics and diversity of Shigella species, the etiologic agents of bacillary dysentery.</title>
        <authorList>
            <person name="Yang F."/>
            <person name="Yang J."/>
            <person name="Zhang X."/>
            <person name="Chen L."/>
            <person name="Jiang Y."/>
            <person name="Yan Y."/>
            <person name="Tang X."/>
            <person name="Wang J."/>
            <person name="Xiong Z."/>
            <person name="Dong J."/>
            <person name="Xue Y."/>
            <person name="Zhu Y."/>
            <person name="Xu X."/>
            <person name="Sun L."/>
            <person name="Chen S."/>
            <person name="Nie H."/>
            <person name="Peng J."/>
            <person name="Xu J."/>
            <person name="Wang Y."/>
            <person name="Yuan Z."/>
            <person name="Wen Y."/>
            <person name="Yao Z."/>
            <person name="Shen Y."/>
            <person name="Qiang B."/>
            <person name="Hou Y."/>
            <person name="Yu J."/>
            <person name="Jin Q."/>
        </authorList>
    </citation>
    <scope>NUCLEOTIDE SEQUENCE [LARGE SCALE GENOMIC DNA]</scope>
    <source>
        <strain>Sb227</strain>
    </source>
</reference>
<sequence>MDVRQSIHSAHAKTLDTQGLHNEFLVEKVFVADEYTMVYSHIDRIIVGGIMPITKTVSVGGEVGKQLGVSYFLERRELGVINIGGAGTITVDGQCYEIGHRDALYVGKGAKEVVFASIDTATPAKFYYNCAPAHTTYPTKKVTPDEVSPVTLGDNLTSNRRTINKYFVPDVLETCQLSMGLTELAPGNLWNTMPCHTHERRMEVYFYFNMDDDACVFHMMGQPQETRHIVMHNEQAVISPSWSIHSGVGTKAYTFIWGMVGENQVFDDMDHVAVKDLR</sequence>
<keyword id="KW-0413">Isomerase</keyword>
<keyword id="KW-0479">Metal-binding</keyword>
<keyword id="KW-0862">Zinc</keyword>
<name>KDUI_SHIBS</name>
<proteinExistence type="inferred from homology"/>
<protein>
    <recommendedName>
        <fullName evidence="1">4-deoxy-L-threo-5-hexosulose-uronate ketol-isomerase</fullName>
        <ecNumber evidence="1">5.3.1.17</ecNumber>
    </recommendedName>
    <alternativeName>
        <fullName evidence="1">5-keto-4-deoxyuronate isomerase</fullName>
    </alternativeName>
    <alternativeName>
        <fullName evidence="1">DKI isomerase</fullName>
    </alternativeName>
</protein>
<accession>Q31XE5</accession>
<comment type="function">
    <text evidence="1">Catalyzes the isomerization of 5-dehydro-4-deoxy-D-glucuronate to 3-deoxy-D-glycero-2,5-hexodiulosonate.</text>
</comment>
<comment type="catalytic activity">
    <reaction evidence="1">
        <text>5-dehydro-4-deoxy-D-glucuronate = 3-deoxy-D-glycero-2,5-hexodiulosonate</text>
        <dbReference type="Rhea" id="RHEA:23896"/>
        <dbReference type="ChEBI" id="CHEBI:17117"/>
        <dbReference type="ChEBI" id="CHEBI:29071"/>
        <dbReference type="EC" id="5.3.1.17"/>
    </reaction>
</comment>
<comment type="cofactor">
    <cofactor evidence="1">
        <name>Zn(2+)</name>
        <dbReference type="ChEBI" id="CHEBI:29105"/>
    </cofactor>
    <text evidence="1">Binds 1 zinc ion per subunit.</text>
</comment>
<comment type="pathway">
    <text evidence="1">Glycan metabolism; pectin degradation; 2-dehydro-3-deoxy-D-gluconate from pectin: step 4/5.</text>
</comment>
<comment type="similarity">
    <text evidence="1">Belongs to the KduI family.</text>
</comment>